<keyword id="KW-0997">Cell inner membrane</keyword>
<keyword id="KW-1003">Cell membrane</keyword>
<keyword id="KW-0472">Membrane</keyword>
<keyword id="KW-1185">Reference proteome</keyword>
<keyword id="KW-0812">Transmembrane</keyword>
<keyword id="KW-1133">Transmembrane helix</keyword>
<evidence type="ECO:0000255" key="1">
    <source>
        <dbReference type="HAMAP-Rule" id="MF_00010"/>
    </source>
</evidence>
<evidence type="ECO:0000305" key="2"/>
<accession>A8AGU5</accession>
<organism>
    <name type="scientific">Citrobacter koseri (strain ATCC BAA-895 / CDC 4225-83 / SGSC4696)</name>
    <dbReference type="NCBI Taxonomy" id="290338"/>
    <lineage>
        <taxon>Bacteria</taxon>
        <taxon>Pseudomonadati</taxon>
        <taxon>Pseudomonadota</taxon>
        <taxon>Gammaproteobacteria</taxon>
        <taxon>Enterobacterales</taxon>
        <taxon>Enterobacteriaceae</taxon>
        <taxon>Citrobacter</taxon>
    </lineage>
</organism>
<gene>
    <name type="ordered locus">CKO_01576</name>
</gene>
<name>Y1576_CITK8</name>
<comment type="subcellular location">
    <subcellularLocation>
        <location evidence="1">Cell inner membrane</location>
        <topology evidence="1">Multi-pass membrane protein</topology>
    </subcellularLocation>
</comment>
<comment type="similarity">
    <text evidence="1">Belongs to the UPF0060 family.</text>
</comment>
<comment type="sequence caution" evidence="2">
    <conflict type="erroneous initiation">
        <sequence resource="EMBL-CDS" id="ABV12708"/>
    </conflict>
</comment>
<proteinExistence type="inferred from homology"/>
<protein>
    <recommendedName>
        <fullName evidence="1">UPF0060 membrane protein CKO_01576</fullName>
    </recommendedName>
</protein>
<reference key="1">
    <citation type="submission" date="2007-08" db="EMBL/GenBank/DDBJ databases">
        <authorList>
            <consortium name="The Citrobacter koseri Genome Sequencing Project"/>
            <person name="McClelland M."/>
            <person name="Sanderson E.K."/>
            <person name="Porwollik S."/>
            <person name="Spieth J."/>
            <person name="Clifton W.S."/>
            <person name="Latreille P."/>
            <person name="Courtney L."/>
            <person name="Wang C."/>
            <person name="Pepin K."/>
            <person name="Bhonagiri V."/>
            <person name="Nash W."/>
            <person name="Johnson M."/>
            <person name="Thiruvilangam P."/>
            <person name="Wilson R."/>
        </authorList>
    </citation>
    <scope>NUCLEOTIDE SEQUENCE [LARGE SCALE GENOMIC DNA]</scope>
    <source>
        <strain>ATCC BAA-895 / CDC 4225-83 / SGSC4696</strain>
    </source>
</reference>
<feature type="chain" id="PRO_0000321581" description="UPF0060 membrane protein CKO_01576">
    <location>
        <begin position="1"/>
        <end position="108"/>
    </location>
</feature>
<feature type="transmembrane region" description="Helical" evidence="1">
    <location>
        <begin position="6"/>
        <end position="26"/>
    </location>
</feature>
<feature type="transmembrane region" description="Helical" evidence="1">
    <location>
        <begin position="29"/>
        <end position="49"/>
    </location>
</feature>
<feature type="transmembrane region" description="Helical" evidence="1">
    <location>
        <begin position="61"/>
        <end position="81"/>
    </location>
</feature>
<feature type="transmembrane region" description="Helical" evidence="1">
    <location>
        <begin position="85"/>
        <end position="105"/>
    </location>
</feature>
<dbReference type="EMBL" id="CP000822">
    <property type="protein sequence ID" value="ABV12708.1"/>
    <property type="status" value="ALT_INIT"/>
    <property type="molecule type" value="Genomic_DNA"/>
</dbReference>
<dbReference type="RefSeq" id="WP_024130346.1">
    <property type="nucleotide sequence ID" value="NC_009792.1"/>
</dbReference>
<dbReference type="STRING" id="290338.CKO_01576"/>
<dbReference type="GeneID" id="45135634"/>
<dbReference type="KEGG" id="cko:CKO_01576"/>
<dbReference type="HOGENOM" id="CLU_117653_2_1_6"/>
<dbReference type="OrthoDB" id="123240at2"/>
<dbReference type="Proteomes" id="UP000008148">
    <property type="component" value="Chromosome"/>
</dbReference>
<dbReference type="GO" id="GO:0005886">
    <property type="term" value="C:plasma membrane"/>
    <property type="evidence" value="ECO:0007669"/>
    <property type="project" value="UniProtKB-SubCell"/>
</dbReference>
<dbReference type="HAMAP" id="MF_00010">
    <property type="entry name" value="UPF0060"/>
    <property type="match status" value="1"/>
</dbReference>
<dbReference type="InterPro" id="IPR003844">
    <property type="entry name" value="UPF0060"/>
</dbReference>
<dbReference type="NCBIfam" id="NF002586">
    <property type="entry name" value="PRK02237.1"/>
    <property type="match status" value="1"/>
</dbReference>
<dbReference type="PANTHER" id="PTHR36116">
    <property type="entry name" value="UPF0060 MEMBRANE PROTEIN YNFA"/>
    <property type="match status" value="1"/>
</dbReference>
<dbReference type="PANTHER" id="PTHR36116:SF1">
    <property type="entry name" value="UPF0060 MEMBRANE PROTEIN YNFA"/>
    <property type="match status" value="1"/>
</dbReference>
<dbReference type="Pfam" id="PF02694">
    <property type="entry name" value="UPF0060"/>
    <property type="match status" value="1"/>
</dbReference>
<dbReference type="SUPFAM" id="SSF103481">
    <property type="entry name" value="Multidrug resistance efflux transporter EmrE"/>
    <property type="match status" value="1"/>
</dbReference>
<sequence>MLKTTLLFFMTALCEIVGCFLPWLWLKRGATAWLLVPAGVSLALFVWLLTLHPAASGRVYAAYGGVYVCTALLWLRFVDGVRLSLYDWSGALIALCGMLIIVAGWGRA</sequence>